<keyword id="KW-0255">Endonuclease</keyword>
<keyword id="KW-0378">Hydrolase</keyword>
<keyword id="KW-0540">Nuclease</keyword>
<keyword id="KW-0694">RNA-binding</keyword>
<keyword id="KW-0819">tRNA processing</keyword>
<comment type="function">
    <text evidence="1">RNaseP catalyzes the removal of the 5'-leader sequence from pre-tRNA to produce the mature 5'-terminus. It can also cleave other RNA substrates such as 4.5S RNA. The protein component plays an auxiliary but essential role in vivo by binding to the 5'-leader sequence and broadening the substrate specificity of the ribozyme.</text>
</comment>
<comment type="catalytic activity">
    <reaction evidence="1">
        <text>Endonucleolytic cleavage of RNA, removing 5'-extranucleotides from tRNA precursor.</text>
        <dbReference type="EC" id="3.1.26.5"/>
    </reaction>
</comment>
<comment type="subunit">
    <text evidence="1">Consists of a catalytic RNA component (M1 or rnpB) and a protein subunit.</text>
</comment>
<comment type="similarity">
    <text evidence="1">Belongs to the RnpA family.</text>
</comment>
<feature type="chain" id="PRO_0000198420" description="Ribonuclease P protein component">
    <location>
        <begin position="1"/>
        <end position="119"/>
    </location>
</feature>
<evidence type="ECO:0000255" key="1">
    <source>
        <dbReference type="HAMAP-Rule" id="MF_00227"/>
    </source>
</evidence>
<protein>
    <recommendedName>
        <fullName evidence="1">Ribonuclease P protein component</fullName>
        <shortName evidence="1">RNase P protein</shortName>
        <shortName evidence="1">RNaseP protein</shortName>
        <ecNumber evidence="1">3.1.26.5</ecNumber>
    </recommendedName>
    <alternativeName>
        <fullName evidence="1">Protein C5</fullName>
    </alternativeName>
</protein>
<gene>
    <name evidence="1" type="primary">rnpA</name>
    <name type="ordered locus">BCE33L5184</name>
</gene>
<name>RNPA_BACCZ</name>
<organism>
    <name type="scientific">Bacillus cereus (strain ZK / E33L)</name>
    <dbReference type="NCBI Taxonomy" id="288681"/>
    <lineage>
        <taxon>Bacteria</taxon>
        <taxon>Bacillati</taxon>
        <taxon>Bacillota</taxon>
        <taxon>Bacilli</taxon>
        <taxon>Bacillales</taxon>
        <taxon>Bacillaceae</taxon>
        <taxon>Bacillus</taxon>
        <taxon>Bacillus cereus group</taxon>
    </lineage>
</organism>
<reference key="1">
    <citation type="journal article" date="2006" name="J. Bacteriol.">
        <title>Pathogenomic sequence analysis of Bacillus cereus and Bacillus thuringiensis isolates closely related to Bacillus anthracis.</title>
        <authorList>
            <person name="Han C.S."/>
            <person name="Xie G."/>
            <person name="Challacombe J.F."/>
            <person name="Altherr M.R."/>
            <person name="Bhotika S.S."/>
            <person name="Bruce D."/>
            <person name="Campbell C.S."/>
            <person name="Campbell M.L."/>
            <person name="Chen J."/>
            <person name="Chertkov O."/>
            <person name="Cleland C."/>
            <person name="Dimitrijevic M."/>
            <person name="Doggett N.A."/>
            <person name="Fawcett J.J."/>
            <person name="Glavina T."/>
            <person name="Goodwin L.A."/>
            <person name="Hill K.K."/>
            <person name="Hitchcock P."/>
            <person name="Jackson P.J."/>
            <person name="Keim P."/>
            <person name="Kewalramani A.R."/>
            <person name="Longmire J."/>
            <person name="Lucas S."/>
            <person name="Malfatti S."/>
            <person name="McMurry K."/>
            <person name="Meincke L.J."/>
            <person name="Misra M."/>
            <person name="Moseman B.L."/>
            <person name="Mundt M."/>
            <person name="Munk A.C."/>
            <person name="Okinaka R.T."/>
            <person name="Parson-Quintana B."/>
            <person name="Reilly L.P."/>
            <person name="Richardson P."/>
            <person name="Robinson D.L."/>
            <person name="Rubin E."/>
            <person name="Saunders E."/>
            <person name="Tapia R."/>
            <person name="Tesmer J.G."/>
            <person name="Thayer N."/>
            <person name="Thompson L.S."/>
            <person name="Tice H."/>
            <person name="Ticknor L.O."/>
            <person name="Wills P.L."/>
            <person name="Brettin T.S."/>
            <person name="Gilna P."/>
        </authorList>
    </citation>
    <scope>NUCLEOTIDE SEQUENCE [LARGE SCALE GENOMIC DNA]</scope>
    <source>
        <strain>ZK / E33L</strain>
    </source>
</reference>
<accession>Q630B5</accession>
<dbReference type="EC" id="3.1.26.5" evidence="1"/>
<dbReference type="EMBL" id="CP000001">
    <property type="protein sequence ID" value="AAU20314.1"/>
    <property type="molecule type" value="Genomic_DNA"/>
</dbReference>
<dbReference type="RefSeq" id="WP_000726628.1">
    <property type="nucleotide sequence ID" value="NZ_CP009968.1"/>
</dbReference>
<dbReference type="SMR" id="Q630B5"/>
<dbReference type="GeneID" id="45025315"/>
<dbReference type="KEGG" id="bcz:BCE33L5184"/>
<dbReference type="PATRIC" id="fig|288681.22.peg.157"/>
<dbReference type="Proteomes" id="UP000002612">
    <property type="component" value="Chromosome"/>
</dbReference>
<dbReference type="GO" id="GO:0030677">
    <property type="term" value="C:ribonuclease P complex"/>
    <property type="evidence" value="ECO:0007669"/>
    <property type="project" value="TreeGrafter"/>
</dbReference>
<dbReference type="GO" id="GO:0042781">
    <property type="term" value="F:3'-tRNA processing endoribonuclease activity"/>
    <property type="evidence" value="ECO:0007669"/>
    <property type="project" value="TreeGrafter"/>
</dbReference>
<dbReference type="GO" id="GO:0004526">
    <property type="term" value="F:ribonuclease P activity"/>
    <property type="evidence" value="ECO:0007669"/>
    <property type="project" value="UniProtKB-UniRule"/>
</dbReference>
<dbReference type="GO" id="GO:0000049">
    <property type="term" value="F:tRNA binding"/>
    <property type="evidence" value="ECO:0007669"/>
    <property type="project" value="UniProtKB-UniRule"/>
</dbReference>
<dbReference type="GO" id="GO:0001682">
    <property type="term" value="P:tRNA 5'-leader removal"/>
    <property type="evidence" value="ECO:0007669"/>
    <property type="project" value="UniProtKB-UniRule"/>
</dbReference>
<dbReference type="FunFam" id="3.30.230.10:FF:000021">
    <property type="entry name" value="Ribonuclease P protein component"/>
    <property type="match status" value="1"/>
</dbReference>
<dbReference type="Gene3D" id="3.30.230.10">
    <property type="match status" value="1"/>
</dbReference>
<dbReference type="HAMAP" id="MF_00227">
    <property type="entry name" value="RNase_P"/>
    <property type="match status" value="1"/>
</dbReference>
<dbReference type="InterPro" id="IPR020568">
    <property type="entry name" value="Ribosomal_Su5_D2-typ_SF"/>
</dbReference>
<dbReference type="InterPro" id="IPR014721">
    <property type="entry name" value="Ribsml_uS5_D2-typ_fold_subgr"/>
</dbReference>
<dbReference type="InterPro" id="IPR000100">
    <property type="entry name" value="RNase_P"/>
</dbReference>
<dbReference type="InterPro" id="IPR020539">
    <property type="entry name" value="RNase_P_CS"/>
</dbReference>
<dbReference type="NCBIfam" id="TIGR00188">
    <property type="entry name" value="rnpA"/>
    <property type="match status" value="1"/>
</dbReference>
<dbReference type="PANTHER" id="PTHR33992">
    <property type="entry name" value="RIBONUCLEASE P PROTEIN COMPONENT"/>
    <property type="match status" value="1"/>
</dbReference>
<dbReference type="PANTHER" id="PTHR33992:SF1">
    <property type="entry name" value="RIBONUCLEASE P PROTEIN COMPONENT"/>
    <property type="match status" value="1"/>
</dbReference>
<dbReference type="Pfam" id="PF00825">
    <property type="entry name" value="Ribonuclease_P"/>
    <property type="match status" value="1"/>
</dbReference>
<dbReference type="SUPFAM" id="SSF54211">
    <property type="entry name" value="Ribosomal protein S5 domain 2-like"/>
    <property type="match status" value="1"/>
</dbReference>
<dbReference type="PROSITE" id="PS00648">
    <property type="entry name" value="RIBONUCLEASE_P"/>
    <property type="match status" value="1"/>
</dbReference>
<proteinExistence type="inferred from homology"/>
<sequence>MKKKHRIKKNDEFQTVFQKGKSNANRQFVVYQLDKEEQPNFRIGLSVSKKIGNAVVRNRIKRMIRQSITELKDEIDSGKDFVIIARKPCAEMTYEELKKSLIHVFKRSGMKRIKSSVRK</sequence>